<reference key="1">
    <citation type="journal article" date="2004" name="Nucleic Acids Res.">
        <title>The genome sequence of Bacillus cereus ATCC 10987 reveals metabolic adaptations and a large plasmid related to Bacillus anthracis pXO1.</title>
        <authorList>
            <person name="Rasko D.A."/>
            <person name="Ravel J."/>
            <person name="Oekstad O.A."/>
            <person name="Helgason E."/>
            <person name="Cer R.Z."/>
            <person name="Jiang L."/>
            <person name="Shores K.A."/>
            <person name="Fouts D.E."/>
            <person name="Tourasse N.J."/>
            <person name="Angiuoli S.V."/>
            <person name="Kolonay J.F."/>
            <person name="Nelson W.C."/>
            <person name="Kolstoe A.-B."/>
            <person name="Fraser C.M."/>
            <person name="Read T.D."/>
        </authorList>
    </citation>
    <scope>NUCLEOTIDE SEQUENCE [LARGE SCALE GENOMIC DNA]</scope>
    <source>
        <strain>ATCC 10987 / NRS 248</strain>
    </source>
</reference>
<dbReference type="EMBL" id="AE017194">
    <property type="protein sequence ID" value="AAS43627.1"/>
    <property type="molecule type" value="Genomic_DNA"/>
</dbReference>
<dbReference type="KEGG" id="bca:BCE_4726"/>
<dbReference type="HOGENOM" id="CLU_125889_1_0_9"/>
<dbReference type="Proteomes" id="UP000002527">
    <property type="component" value="Chromosome"/>
</dbReference>
<dbReference type="GO" id="GO:0005886">
    <property type="term" value="C:plasma membrane"/>
    <property type="evidence" value="ECO:0007669"/>
    <property type="project" value="UniProtKB-SubCell"/>
</dbReference>
<dbReference type="HAMAP" id="MF_01874">
    <property type="entry name" value="UPF0756"/>
    <property type="match status" value="1"/>
</dbReference>
<dbReference type="InterPro" id="IPR007382">
    <property type="entry name" value="UPF0756_TM"/>
</dbReference>
<dbReference type="PANTHER" id="PTHR38452">
    <property type="entry name" value="UPF0756 MEMBRANE PROTEIN YEAL"/>
    <property type="match status" value="1"/>
</dbReference>
<dbReference type="PANTHER" id="PTHR38452:SF1">
    <property type="entry name" value="UPF0756 MEMBRANE PROTEIN YEAL"/>
    <property type="match status" value="1"/>
</dbReference>
<dbReference type="Pfam" id="PF04284">
    <property type="entry name" value="DUF441"/>
    <property type="match status" value="1"/>
</dbReference>
<name>Y4726_BACC1</name>
<sequence length="153" mass="15998">MISQSTLFLFILLIIGLIAKNQSLTVAIGVLFLLKFTFLGDKVFPYLQTKGINLGVTVITIAVLVPIATGEIGFKQLGEAAKSYYAWIALASGVAVALLAKGGVQLLTTDPHITTALVFGTIIAVALFNGVAVGPLIGAGIAYAVMSIIQMFK</sequence>
<accession>Q72ZE2</accession>
<protein>
    <recommendedName>
        <fullName evidence="1">UPF0756 membrane protein BCE_4726</fullName>
    </recommendedName>
</protein>
<gene>
    <name type="ordered locus">BCE_4726</name>
</gene>
<organism>
    <name type="scientific">Bacillus cereus (strain ATCC 10987 / NRS 248)</name>
    <dbReference type="NCBI Taxonomy" id="222523"/>
    <lineage>
        <taxon>Bacteria</taxon>
        <taxon>Bacillati</taxon>
        <taxon>Bacillota</taxon>
        <taxon>Bacilli</taxon>
        <taxon>Bacillales</taxon>
        <taxon>Bacillaceae</taxon>
        <taxon>Bacillus</taxon>
        <taxon>Bacillus cereus group</taxon>
    </lineage>
</organism>
<keyword id="KW-1003">Cell membrane</keyword>
<keyword id="KW-0472">Membrane</keyword>
<keyword id="KW-0812">Transmembrane</keyword>
<keyword id="KW-1133">Transmembrane helix</keyword>
<comment type="subcellular location">
    <subcellularLocation>
        <location evidence="1">Cell membrane</location>
        <topology evidence="1">Multi-pass membrane protein</topology>
    </subcellularLocation>
</comment>
<comment type="similarity">
    <text evidence="1">Belongs to the UPF0756 family.</text>
</comment>
<proteinExistence type="inferred from homology"/>
<evidence type="ECO:0000255" key="1">
    <source>
        <dbReference type="HAMAP-Rule" id="MF_01874"/>
    </source>
</evidence>
<feature type="chain" id="PRO_0000388824" description="UPF0756 membrane protein BCE_4726">
    <location>
        <begin position="1"/>
        <end position="153"/>
    </location>
</feature>
<feature type="transmembrane region" description="Helical" evidence="1">
    <location>
        <begin position="8"/>
        <end position="28"/>
    </location>
</feature>
<feature type="transmembrane region" description="Helical" evidence="1">
    <location>
        <begin position="54"/>
        <end position="74"/>
    </location>
</feature>
<feature type="transmembrane region" description="Helical" evidence="1">
    <location>
        <begin position="87"/>
        <end position="107"/>
    </location>
</feature>
<feature type="transmembrane region" description="Helical" evidence="1">
    <location>
        <begin position="117"/>
        <end position="137"/>
    </location>
</feature>